<evidence type="ECO:0000250" key="1"/>
<evidence type="ECO:0000305" key="2"/>
<evidence type="ECO:0000312" key="3">
    <source>
        <dbReference type="WormBase" id="CBG01004"/>
    </source>
</evidence>
<name>PSF1_CAEBR</name>
<proteinExistence type="inferred from homology"/>
<gene>
    <name evidence="3" type="primary">psf-1</name>
    <name evidence="3" type="ORF">CBG01004</name>
</gene>
<organism>
    <name type="scientific">Caenorhabditis briggsae</name>
    <dbReference type="NCBI Taxonomy" id="6238"/>
    <lineage>
        <taxon>Eukaryota</taxon>
        <taxon>Metazoa</taxon>
        <taxon>Ecdysozoa</taxon>
        <taxon>Nematoda</taxon>
        <taxon>Chromadorea</taxon>
        <taxon>Rhabditida</taxon>
        <taxon>Rhabditina</taxon>
        <taxon>Rhabditomorpha</taxon>
        <taxon>Rhabditoidea</taxon>
        <taxon>Rhabditidae</taxon>
        <taxon>Peloderinae</taxon>
        <taxon>Caenorhabditis</taxon>
    </lineage>
</organism>
<sequence>MSSNDQQRGGVADKALQLVMEMKRNPDVLPPYNADLVRQCQKKIDELFHKNAAVVERMRNGLEHDPSLLQPRLAAMCHIRRCMMAYVNERKNRIRSFRWRYGGALPASVRNALCEAEIQFFNEYSSTLARFQSNLGEAGVNLLLHTAPPKTLFVQVRTLEDYGEFETSDGTQVQLTKDSLHSLPRQDCEMLIRQGVLELVH</sequence>
<protein>
    <recommendedName>
        <fullName>Probable DNA replication complex GINS protein PSF1</fullName>
    </recommendedName>
    <alternativeName>
        <fullName>GINS complex subunit 1</fullName>
    </alternativeName>
</protein>
<reference key="1">
    <citation type="journal article" date="2003" name="PLoS Biol.">
        <title>The genome sequence of Caenorhabditis briggsae: a platform for comparative genomics.</title>
        <authorList>
            <person name="Stein L.D."/>
            <person name="Bao Z."/>
            <person name="Blasiar D."/>
            <person name="Blumenthal T."/>
            <person name="Brent M.R."/>
            <person name="Chen N."/>
            <person name="Chinwalla A."/>
            <person name="Clarke L."/>
            <person name="Clee C."/>
            <person name="Coghlan A."/>
            <person name="Coulson A."/>
            <person name="D'Eustachio P."/>
            <person name="Fitch D.H.A."/>
            <person name="Fulton L.A."/>
            <person name="Fulton R.E."/>
            <person name="Griffiths-Jones S."/>
            <person name="Harris T.W."/>
            <person name="Hillier L.W."/>
            <person name="Kamath R."/>
            <person name="Kuwabara P.E."/>
            <person name="Mardis E.R."/>
            <person name="Marra M.A."/>
            <person name="Miner T.L."/>
            <person name="Minx P."/>
            <person name="Mullikin J.C."/>
            <person name="Plumb R.W."/>
            <person name="Rogers J."/>
            <person name="Schein J.E."/>
            <person name="Sohrmann M."/>
            <person name="Spieth J."/>
            <person name="Stajich J.E."/>
            <person name="Wei C."/>
            <person name="Willey D."/>
            <person name="Wilson R.K."/>
            <person name="Durbin R.M."/>
            <person name="Waterston R.H."/>
        </authorList>
    </citation>
    <scope>NUCLEOTIDE SEQUENCE [LARGE SCALE GENOMIC DNA]</scope>
    <source>
        <strain>AF16</strain>
    </source>
</reference>
<keyword id="KW-0235">DNA replication</keyword>
<keyword id="KW-0539">Nucleus</keyword>
<keyword id="KW-1185">Reference proteome</keyword>
<accession>Q626F4</accession>
<accession>A8WP47</accession>
<feature type="chain" id="PRO_0000219037" description="Probable DNA replication complex GINS protein PSF1">
    <location>
        <begin position="1"/>
        <end position="201"/>
    </location>
</feature>
<dbReference type="EMBL" id="HE600951">
    <property type="protein sequence ID" value="CAP22253.1"/>
    <property type="molecule type" value="Genomic_DNA"/>
</dbReference>
<dbReference type="RefSeq" id="XP_002629766.1">
    <property type="nucleotide sequence ID" value="XM_002629720.1"/>
</dbReference>
<dbReference type="SMR" id="Q626F4"/>
<dbReference type="FunCoup" id="Q626F4">
    <property type="interactions" value="1647"/>
</dbReference>
<dbReference type="STRING" id="6238.Q626F4"/>
<dbReference type="EnsemblMetazoa" id="CBG01004.1">
    <property type="protein sequence ID" value="CBG01004.1"/>
    <property type="gene ID" value="WBGene00024301"/>
</dbReference>
<dbReference type="GeneID" id="8573261"/>
<dbReference type="KEGG" id="cbr:CBG_01004"/>
<dbReference type="CTD" id="8573261"/>
<dbReference type="WormBase" id="CBG01004">
    <property type="protein sequence ID" value="CBP05883"/>
    <property type="gene ID" value="WBGene00024301"/>
    <property type="gene designation" value="Cbr-psf-1"/>
</dbReference>
<dbReference type="eggNOG" id="KOG3303">
    <property type="taxonomic scope" value="Eukaryota"/>
</dbReference>
<dbReference type="HOGENOM" id="CLU_079191_1_0_1"/>
<dbReference type="InParanoid" id="Q626F4"/>
<dbReference type="OMA" id="AMCHIRR"/>
<dbReference type="Proteomes" id="UP000008549">
    <property type="component" value="Unassembled WGS sequence"/>
</dbReference>
<dbReference type="GO" id="GO:0000811">
    <property type="term" value="C:GINS complex"/>
    <property type="evidence" value="ECO:0000318"/>
    <property type="project" value="GO_Central"/>
</dbReference>
<dbReference type="GO" id="GO:1902983">
    <property type="term" value="P:DNA strand elongation involved in mitotic DNA replication"/>
    <property type="evidence" value="ECO:0000318"/>
    <property type="project" value="GO_Central"/>
</dbReference>
<dbReference type="CDD" id="cd11710">
    <property type="entry name" value="GINS_A_psf1"/>
    <property type="match status" value="1"/>
</dbReference>
<dbReference type="CDD" id="cd21696">
    <property type="entry name" value="GINS_B_Psf1"/>
    <property type="match status" value="1"/>
</dbReference>
<dbReference type="FunFam" id="1.20.58.1030:FF:000015">
    <property type="entry name" value="Probable DNA replication complex GINS protein PSF1"/>
    <property type="match status" value="1"/>
</dbReference>
<dbReference type="Gene3D" id="1.20.58.1030">
    <property type="match status" value="1"/>
</dbReference>
<dbReference type="InterPro" id="IPR021151">
    <property type="entry name" value="GINS_A"/>
</dbReference>
<dbReference type="InterPro" id="IPR036224">
    <property type="entry name" value="GINS_bundle-like_dom_sf"/>
</dbReference>
<dbReference type="InterPro" id="IPR005339">
    <property type="entry name" value="GINS_Psf1"/>
</dbReference>
<dbReference type="InterPro" id="IPR056783">
    <property type="entry name" value="PSF1_C"/>
</dbReference>
<dbReference type="PANTHER" id="PTHR12914:SF2">
    <property type="entry name" value="DNA REPLICATION COMPLEX GINS PROTEIN PSF1"/>
    <property type="match status" value="1"/>
</dbReference>
<dbReference type="PANTHER" id="PTHR12914">
    <property type="entry name" value="PARTNER OF SLD5"/>
    <property type="match status" value="1"/>
</dbReference>
<dbReference type="Pfam" id="PF24997">
    <property type="entry name" value="PSF1_C"/>
    <property type="match status" value="1"/>
</dbReference>
<dbReference type="Pfam" id="PF05916">
    <property type="entry name" value="Sld5"/>
    <property type="match status" value="1"/>
</dbReference>
<dbReference type="SUPFAM" id="SSF158573">
    <property type="entry name" value="GINS helical bundle-like"/>
    <property type="match status" value="1"/>
</dbReference>
<comment type="function">
    <text evidence="1">The GINS complex plays an essential role in the initiation of DNA replication.</text>
</comment>
<comment type="subunit">
    <text evidence="1">Component of the GINS complex which is a heterotetramer of gins1, gins2, gins3 and gins4.</text>
</comment>
<comment type="subcellular location">
    <subcellularLocation>
        <location evidence="1">Nucleus</location>
    </subcellularLocation>
</comment>
<comment type="similarity">
    <text evidence="2">Belongs to the GINS1/PSF1 family.</text>
</comment>